<organism>
    <name type="scientific">Acetivibrio thermocellus (strain ATCC 27405 / DSM 1237 / JCM 9322 / NBRC 103400 / NCIMB 10682 / NRRL B-4536 / VPI 7372)</name>
    <name type="common">Clostridium thermocellum</name>
    <dbReference type="NCBI Taxonomy" id="203119"/>
    <lineage>
        <taxon>Bacteria</taxon>
        <taxon>Bacillati</taxon>
        <taxon>Bacillota</taxon>
        <taxon>Clostridia</taxon>
        <taxon>Eubacteriales</taxon>
        <taxon>Oscillospiraceae</taxon>
        <taxon>Acetivibrio</taxon>
    </lineage>
</organism>
<comment type="function">
    <text evidence="1">Specifically methylates the N7 position of a guanine in 16S rRNA.</text>
</comment>
<comment type="subcellular location">
    <subcellularLocation>
        <location evidence="1">Cytoplasm</location>
    </subcellularLocation>
</comment>
<comment type="similarity">
    <text evidence="1">Belongs to the methyltransferase superfamily. RNA methyltransferase RsmG family.</text>
</comment>
<protein>
    <recommendedName>
        <fullName evidence="1">Ribosomal RNA small subunit methyltransferase G</fullName>
        <ecNumber evidence="1">2.1.1.-</ecNumber>
    </recommendedName>
    <alternativeName>
        <fullName evidence="1">16S rRNA 7-methylguanosine methyltransferase</fullName>
        <shortName evidence="1">16S rRNA m7G methyltransferase</shortName>
    </alternativeName>
</protein>
<dbReference type="EC" id="2.1.1.-" evidence="1"/>
<dbReference type="EMBL" id="CP000568">
    <property type="protein sequence ID" value="ABN53565.1"/>
    <property type="molecule type" value="Genomic_DNA"/>
</dbReference>
<dbReference type="RefSeq" id="WP_003513362.1">
    <property type="nucleotide sequence ID" value="NC_009012.1"/>
</dbReference>
<dbReference type="SMR" id="A3DHY6"/>
<dbReference type="STRING" id="203119.Cthe_2363"/>
<dbReference type="GeneID" id="35805920"/>
<dbReference type="KEGG" id="cth:Cthe_2363"/>
<dbReference type="eggNOG" id="COG0357">
    <property type="taxonomic scope" value="Bacteria"/>
</dbReference>
<dbReference type="HOGENOM" id="CLU_065341_0_0_9"/>
<dbReference type="OrthoDB" id="9808773at2"/>
<dbReference type="Proteomes" id="UP000002145">
    <property type="component" value="Chromosome"/>
</dbReference>
<dbReference type="GO" id="GO:0005829">
    <property type="term" value="C:cytosol"/>
    <property type="evidence" value="ECO:0007669"/>
    <property type="project" value="TreeGrafter"/>
</dbReference>
<dbReference type="GO" id="GO:0070043">
    <property type="term" value="F:rRNA (guanine-N7-)-methyltransferase activity"/>
    <property type="evidence" value="ECO:0007669"/>
    <property type="project" value="UniProtKB-UniRule"/>
</dbReference>
<dbReference type="FunFam" id="3.40.50.150:FF:000041">
    <property type="entry name" value="Ribosomal RNA small subunit methyltransferase G"/>
    <property type="match status" value="1"/>
</dbReference>
<dbReference type="Gene3D" id="3.40.50.150">
    <property type="entry name" value="Vaccinia Virus protein VP39"/>
    <property type="match status" value="1"/>
</dbReference>
<dbReference type="HAMAP" id="MF_00074">
    <property type="entry name" value="16SrRNA_methyltr_G"/>
    <property type="match status" value="1"/>
</dbReference>
<dbReference type="InterPro" id="IPR003682">
    <property type="entry name" value="rRNA_ssu_MeTfrase_G"/>
</dbReference>
<dbReference type="InterPro" id="IPR029063">
    <property type="entry name" value="SAM-dependent_MTases_sf"/>
</dbReference>
<dbReference type="NCBIfam" id="TIGR00138">
    <property type="entry name" value="rsmG_gidB"/>
    <property type="match status" value="1"/>
</dbReference>
<dbReference type="PANTHER" id="PTHR31760">
    <property type="entry name" value="S-ADENOSYL-L-METHIONINE-DEPENDENT METHYLTRANSFERASES SUPERFAMILY PROTEIN"/>
    <property type="match status" value="1"/>
</dbReference>
<dbReference type="PANTHER" id="PTHR31760:SF0">
    <property type="entry name" value="S-ADENOSYL-L-METHIONINE-DEPENDENT METHYLTRANSFERASES SUPERFAMILY PROTEIN"/>
    <property type="match status" value="1"/>
</dbReference>
<dbReference type="Pfam" id="PF02527">
    <property type="entry name" value="GidB"/>
    <property type="match status" value="1"/>
</dbReference>
<dbReference type="PIRSF" id="PIRSF003078">
    <property type="entry name" value="GidB"/>
    <property type="match status" value="1"/>
</dbReference>
<dbReference type="SUPFAM" id="SSF53335">
    <property type="entry name" value="S-adenosyl-L-methionine-dependent methyltransferases"/>
    <property type="match status" value="1"/>
</dbReference>
<sequence length="242" mass="27353">MDEKELKLRKLLIEGASGFGVNLDDEQIDKFFAYKDVLKEWNQKMNLTAIEDDEEIILKHFIDSISICPIIKDKNLALIDVGTGAGFPGIPVKIVFPELKVKLLDSLEKRTKFLNEVIERLDLKDISTVHARAEEKGVDPDYREKYDISVARAVASLPVLLEYCLPFVKVGGCFIAMKGNSTEEVENSKKALEILGGKIEDILEFNLPFSDIKRNVIVIKKFRQTPTKYPRKSGKPSKNPLT</sequence>
<evidence type="ECO:0000255" key="1">
    <source>
        <dbReference type="HAMAP-Rule" id="MF_00074"/>
    </source>
</evidence>
<accession>A3DHY6</accession>
<name>RSMG_ACET2</name>
<keyword id="KW-0963">Cytoplasm</keyword>
<keyword id="KW-0489">Methyltransferase</keyword>
<keyword id="KW-1185">Reference proteome</keyword>
<keyword id="KW-0698">rRNA processing</keyword>
<keyword id="KW-0949">S-adenosyl-L-methionine</keyword>
<keyword id="KW-0808">Transferase</keyword>
<feature type="chain" id="PRO_0000335338" description="Ribosomal RNA small subunit methyltransferase G">
    <location>
        <begin position="1"/>
        <end position="242"/>
    </location>
</feature>
<feature type="binding site" evidence="1">
    <location>
        <position position="82"/>
    </location>
    <ligand>
        <name>S-adenosyl-L-methionine</name>
        <dbReference type="ChEBI" id="CHEBI:59789"/>
    </ligand>
</feature>
<feature type="binding site" evidence="1">
    <location>
        <position position="87"/>
    </location>
    <ligand>
        <name>S-adenosyl-L-methionine</name>
        <dbReference type="ChEBI" id="CHEBI:59789"/>
    </ligand>
</feature>
<feature type="binding site" evidence="1">
    <location>
        <begin position="133"/>
        <end position="134"/>
    </location>
    <ligand>
        <name>S-adenosyl-L-methionine</name>
        <dbReference type="ChEBI" id="CHEBI:59789"/>
    </ligand>
</feature>
<feature type="binding site" evidence="1">
    <location>
        <position position="152"/>
    </location>
    <ligand>
        <name>S-adenosyl-L-methionine</name>
        <dbReference type="ChEBI" id="CHEBI:59789"/>
    </ligand>
</feature>
<proteinExistence type="inferred from homology"/>
<gene>
    <name evidence="1" type="primary">rsmG</name>
    <name type="ordered locus">Cthe_2363</name>
</gene>
<reference key="1">
    <citation type="submission" date="2007-02" db="EMBL/GenBank/DDBJ databases">
        <title>Complete sequence of Clostridium thermocellum ATCC 27405.</title>
        <authorList>
            <consortium name="US DOE Joint Genome Institute"/>
            <person name="Copeland A."/>
            <person name="Lucas S."/>
            <person name="Lapidus A."/>
            <person name="Barry K."/>
            <person name="Detter J.C."/>
            <person name="Glavina del Rio T."/>
            <person name="Hammon N."/>
            <person name="Israni S."/>
            <person name="Dalin E."/>
            <person name="Tice H."/>
            <person name="Pitluck S."/>
            <person name="Chertkov O."/>
            <person name="Brettin T."/>
            <person name="Bruce D."/>
            <person name="Han C."/>
            <person name="Tapia R."/>
            <person name="Gilna P."/>
            <person name="Schmutz J."/>
            <person name="Larimer F."/>
            <person name="Land M."/>
            <person name="Hauser L."/>
            <person name="Kyrpides N."/>
            <person name="Mikhailova N."/>
            <person name="Wu J.H.D."/>
            <person name="Newcomb M."/>
            <person name="Richardson P."/>
        </authorList>
    </citation>
    <scope>NUCLEOTIDE SEQUENCE [LARGE SCALE GENOMIC DNA]</scope>
    <source>
        <strain>ATCC 27405 / DSM 1237 / JCM 9322 / NBRC 103400 / NCIMB 10682 / NRRL B-4536 / VPI 7372</strain>
    </source>
</reference>